<reference key="1">
    <citation type="submission" date="2006-12" db="EMBL/GenBank/DDBJ databases">
        <title>Complete sequence of Pyrobaculum islandicum DSM 4184.</title>
        <authorList>
            <person name="Copeland A."/>
            <person name="Lucas S."/>
            <person name="Lapidus A."/>
            <person name="Barry K."/>
            <person name="Detter J.C."/>
            <person name="Glavina del Rio T."/>
            <person name="Dalin E."/>
            <person name="Tice H."/>
            <person name="Pitluck S."/>
            <person name="Meincke L."/>
            <person name="Brettin T."/>
            <person name="Bruce D."/>
            <person name="Han C."/>
            <person name="Tapia R."/>
            <person name="Gilna P."/>
            <person name="Schmutz J."/>
            <person name="Larimer F."/>
            <person name="Land M."/>
            <person name="Hauser L."/>
            <person name="Kyrpides N."/>
            <person name="Mikhailova N."/>
            <person name="Cozen A.E."/>
            <person name="Fitz-Gibbon S.T."/>
            <person name="House C.H."/>
            <person name="Saltikov C."/>
            <person name="Lowe T."/>
            <person name="Richardson P."/>
        </authorList>
    </citation>
    <scope>NUCLEOTIDE SEQUENCE [LARGE SCALE GENOMIC DNA]</scope>
    <source>
        <strain>DSM 4184 / JCM 9189 / GEO3</strain>
    </source>
</reference>
<gene>
    <name evidence="1" type="primary">metG</name>
    <name type="ordered locus">Pisl_0346</name>
</gene>
<protein>
    <recommendedName>
        <fullName evidence="1">Methionine--tRNA ligase</fullName>
        <ecNumber evidence="1">6.1.1.10</ecNumber>
    </recommendedName>
    <alternativeName>
        <fullName evidence="1">Methionyl-tRNA synthetase</fullName>
        <shortName evidence="1">MetRS</shortName>
    </alternativeName>
</protein>
<dbReference type="EC" id="6.1.1.10" evidence="1"/>
<dbReference type="EMBL" id="CP000504">
    <property type="protein sequence ID" value="ABL87524.1"/>
    <property type="molecule type" value="Genomic_DNA"/>
</dbReference>
<dbReference type="RefSeq" id="WP_011762101.1">
    <property type="nucleotide sequence ID" value="NC_008701.1"/>
</dbReference>
<dbReference type="SMR" id="A1RRE2"/>
<dbReference type="STRING" id="384616.Pisl_0346"/>
<dbReference type="GeneID" id="4617550"/>
<dbReference type="KEGG" id="pis:Pisl_0346"/>
<dbReference type="eggNOG" id="arCOG00810">
    <property type="taxonomic scope" value="Archaea"/>
</dbReference>
<dbReference type="HOGENOM" id="CLU_009710_1_2_2"/>
<dbReference type="OrthoDB" id="371856at2157"/>
<dbReference type="Proteomes" id="UP000002595">
    <property type="component" value="Chromosome"/>
</dbReference>
<dbReference type="GO" id="GO:0017101">
    <property type="term" value="C:aminoacyl-tRNA synthetase multienzyme complex"/>
    <property type="evidence" value="ECO:0007669"/>
    <property type="project" value="TreeGrafter"/>
</dbReference>
<dbReference type="GO" id="GO:0005829">
    <property type="term" value="C:cytosol"/>
    <property type="evidence" value="ECO:0007669"/>
    <property type="project" value="TreeGrafter"/>
</dbReference>
<dbReference type="GO" id="GO:0005524">
    <property type="term" value="F:ATP binding"/>
    <property type="evidence" value="ECO:0007669"/>
    <property type="project" value="UniProtKB-UniRule"/>
</dbReference>
<dbReference type="GO" id="GO:0046872">
    <property type="term" value="F:metal ion binding"/>
    <property type="evidence" value="ECO:0007669"/>
    <property type="project" value="UniProtKB-KW"/>
</dbReference>
<dbReference type="GO" id="GO:0004825">
    <property type="term" value="F:methionine-tRNA ligase activity"/>
    <property type="evidence" value="ECO:0007669"/>
    <property type="project" value="UniProtKB-UniRule"/>
</dbReference>
<dbReference type="GO" id="GO:0006431">
    <property type="term" value="P:methionyl-tRNA aminoacylation"/>
    <property type="evidence" value="ECO:0007669"/>
    <property type="project" value="UniProtKB-UniRule"/>
</dbReference>
<dbReference type="CDD" id="cd07957">
    <property type="entry name" value="Anticodon_Ia_Met"/>
    <property type="match status" value="1"/>
</dbReference>
<dbReference type="CDD" id="cd00814">
    <property type="entry name" value="MetRS_core"/>
    <property type="match status" value="1"/>
</dbReference>
<dbReference type="FunFam" id="2.20.28.20:FF:000001">
    <property type="entry name" value="Methionine--tRNA ligase"/>
    <property type="match status" value="1"/>
</dbReference>
<dbReference type="Gene3D" id="3.40.50.620">
    <property type="entry name" value="HUPs"/>
    <property type="match status" value="1"/>
</dbReference>
<dbReference type="Gene3D" id="1.10.730.10">
    <property type="entry name" value="Isoleucyl-tRNA Synthetase, Domain 1"/>
    <property type="match status" value="1"/>
</dbReference>
<dbReference type="Gene3D" id="2.20.28.20">
    <property type="entry name" value="Methionyl-tRNA synthetase, Zn-domain"/>
    <property type="match status" value="1"/>
</dbReference>
<dbReference type="HAMAP" id="MF_00098">
    <property type="entry name" value="Met_tRNA_synth_type1"/>
    <property type="match status" value="1"/>
</dbReference>
<dbReference type="InterPro" id="IPR041872">
    <property type="entry name" value="Anticodon_Met"/>
</dbReference>
<dbReference type="InterPro" id="IPR023458">
    <property type="entry name" value="Met-tRNA_ligase_1"/>
</dbReference>
<dbReference type="InterPro" id="IPR014758">
    <property type="entry name" value="Met-tRNA_synth"/>
</dbReference>
<dbReference type="InterPro" id="IPR015413">
    <property type="entry name" value="Methionyl/Leucyl_tRNA_Synth"/>
</dbReference>
<dbReference type="InterPro" id="IPR033911">
    <property type="entry name" value="MetRS_core"/>
</dbReference>
<dbReference type="InterPro" id="IPR029038">
    <property type="entry name" value="MetRS_Zn"/>
</dbReference>
<dbReference type="InterPro" id="IPR014729">
    <property type="entry name" value="Rossmann-like_a/b/a_fold"/>
</dbReference>
<dbReference type="InterPro" id="IPR009080">
    <property type="entry name" value="tRNAsynth_Ia_anticodon-bd"/>
</dbReference>
<dbReference type="NCBIfam" id="TIGR00398">
    <property type="entry name" value="metG"/>
    <property type="match status" value="1"/>
</dbReference>
<dbReference type="PANTHER" id="PTHR45765">
    <property type="entry name" value="METHIONINE--TRNA LIGASE"/>
    <property type="match status" value="1"/>
</dbReference>
<dbReference type="PANTHER" id="PTHR45765:SF1">
    <property type="entry name" value="METHIONINE--TRNA LIGASE, CYTOPLASMIC"/>
    <property type="match status" value="1"/>
</dbReference>
<dbReference type="Pfam" id="PF19303">
    <property type="entry name" value="Anticodon_3"/>
    <property type="match status" value="1"/>
</dbReference>
<dbReference type="Pfam" id="PF09334">
    <property type="entry name" value="tRNA-synt_1g"/>
    <property type="match status" value="1"/>
</dbReference>
<dbReference type="PRINTS" id="PR01041">
    <property type="entry name" value="TRNASYNTHMET"/>
</dbReference>
<dbReference type="SUPFAM" id="SSF47323">
    <property type="entry name" value="Anticodon-binding domain of a subclass of class I aminoacyl-tRNA synthetases"/>
    <property type="match status" value="1"/>
</dbReference>
<dbReference type="SUPFAM" id="SSF57770">
    <property type="entry name" value="Methionyl-tRNA synthetase (MetRS), Zn-domain"/>
    <property type="match status" value="1"/>
</dbReference>
<dbReference type="SUPFAM" id="SSF52374">
    <property type="entry name" value="Nucleotidylyl transferase"/>
    <property type="match status" value="1"/>
</dbReference>
<organism>
    <name type="scientific">Pyrobaculum islandicum (strain DSM 4184 / JCM 9189 / GEO3)</name>
    <dbReference type="NCBI Taxonomy" id="384616"/>
    <lineage>
        <taxon>Archaea</taxon>
        <taxon>Thermoproteota</taxon>
        <taxon>Thermoprotei</taxon>
        <taxon>Thermoproteales</taxon>
        <taxon>Thermoproteaceae</taxon>
        <taxon>Pyrobaculum</taxon>
    </lineage>
</organism>
<proteinExistence type="inferred from homology"/>
<sequence>MAKYVIGSAWPYVQTVPHLGNLIGSVLSADVYARYLRFRGHDVVFVSGSDMHGTPIEVEAIQLGVDPEEYAKKMHQIVAELFKRWDISFDLYTHTHSDTHIKFVQNFFLKIYNNGYIFTKEEEVPYCPRDKIYLPDRFIIGKCPYCGYERARGDQCENCGRLLDPKQLIEPRCAICGSRPEWRITKHWYLDLRKLEDRIRKYVEENPHLPPNAKEMSLGMLKEGLKPRAITRDNKWGIPAPFPGAEGKTIYVWFEAVLGYISAVVELFREDAGKWERYWKDPETKIVFFVGKDNIPFHVIILPALLLANGEGYTLPTTTASTEYLLYEGDKFSKSRRWGIWIDEALQLMPPDYWRFILIYIRPENRDTSFTWALALEIINKIMNDDVGNYINRVLTFIKNRMGGVVPPPGAPTREDEEFINRVIQLFKKAEKHYDAIELKDALHTVVEIAREGNRYLNARAPWELLRRDIEVANAVMYRAYWSLKTIAAGLTPVTPRSAAELWKMLGISQPSWDEAYKPPTPGTPLGDVRPLFRKFTEEEVKDMLKKLEELRSQRASKKYPWEQVLL</sequence>
<feature type="chain" id="PRO_0000331955" description="Methionine--tRNA ligase">
    <location>
        <begin position="1"/>
        <end position="567"/>
    </location>
</feature>
<feature type="short sequence motif" description="'HIGH' region">
    <location>
        <begin position="11"/>
        <end position="21"/>
    </location>
</feature>
<feature type="short sequence motif" description="'KMSKS' region">
    <location>
        <begin position="331"/>
        <end position="335"/>
    </location>
</feature>
<feature type="binding site" evidence="1">
    <location>
        <position position="143"/>
    </location>
    <ligand>
        <name>Zn(2+)</name>
        <dbReference type="ChEBI" id="CHEBI:29105"/>
    </ligand>
</feature>
<feature type="binding site" evidence="1">
    <location>
        <position position="146"/>
    </location>
    <ligand>
        <name>Zn(2+)</name>
        <dbReference type="ChEBI" id="CHEBI:29105"/>
    </ligand>
</feature>
<feature type="binding site" evidence="1">
    <location>
        <position position="156"/>
    </location>
    <ligand>
        <name>Zn(2+)</name>
        <dbReference type="ChEBI" id="CHEBI:29105"/>
    </ligand>
</feature>
<feature type="binding site" evidence="1">
    <location>
        <position position="159"/>
    </location>
    <ligand>
        <name>Zn(2+)</name>
        <dbReference type="ChEBI" id="CHEBI:29105"/>
    </ligand>
</feature>
<feature type="binding site" evidence="1">
    <location>
        <position position="334"/>
    </location>
    <ligand>
        <name>ATP</name>
        <dbReference type="ChEBI" id="CHEBI:30616"/>
    </ligand>
</feature>
<accession>A1RRE2</accession>
<name>SYM_PYRIL</name>
<keyword id="KW-0030">Aminoacyl-tRNA synthetase</keyword>
<keyword id="KW-0067">ATP-binding</keyword>
<keyword id="KW-0963">Cytoplasm</keyword>
<keyword id="KW-0436">Ligase</keyword>
<keyword id="KW-0479">Metal-binding</keyword>
<keyword id="KW-0547">Nucleotide-binding</keyword>
<keyword id="KW-0648">Protein biosynthesis</keyword>
<keyword id="KW-0862">Zinc</keyword>
<evidence type="ECO:0000255" key="1">
    <source>
        <dbReference type="HAMAP-Rule" id="MF_00098"/>
    </source>
</evidence>
<comment type="function">
    <text evidence="1">Is required not only for elongation of protein synthesis but also for the initiation of all mRNA translation through initiator tRNA(fMet) aminoacylation.</text>
</comment>
<comment type="catalytic activity">
    <reaction evidence="1">
        <text>tRNA(Met) + L-methionine + ATP = L-methionyl-tRNA(Met) + AMP + diphosphate</text>
        <dbReference type="Rhea" id="RHEA:13481"/>
        <dbReference type="Rhea" id="RHEA-COMP:9667"/>
        <dbReference type="Rhea" id="RHEA-COMP:9698"/>
        <dbReference type="ChEBI" id="CHEBI:30616"/>
        <dbReference type="ChEBI" id="CHEBI:33019"/>
        <dbReference type="ChEBI" id="CHEBI:57844"/>
        <dbReference type="ChEBI" id="CHEBI:78442"/>
        <dbReference type="ChEBI" id="CHEBI:78530"/>
        <dbReference type="ChEBI" id="CHEBI:456215"/>
        <dbReference type="EC" id="6.1.1.10"/>
    </reaction>
</comment>
<comment type="cofactor">
    <cofactor evidence="1">
        <name>Zn(2+)</name>
        <dbReference type="ChEBI" id="CHEBI:29105"/>
    </cofactor>
    <text evidence="1">Binds 1 zinc ion per subunit.</text>
</comment>
<comment type="subcellular location">
    <subcellularLocation>
        <location evidence="1">Cytoplasm</location>
    </subcellularLocation>
</comment>
<comment type="similarity">
    <text evidence="1">Belongs to the class-I aminoacyl-tRNA synthetase family. MetG type 1 subfamily.</text>
</comment>